<feature type="chain" id="PRO_1000074318" description="Glutamate--tRNA ligase">
    <location>
        <begin position="1"/>
        <end position="506"/>
    </location>
</feature>
<feature type="short sequence motif" description="'HIGH' region" evidence="1">
    <location>
        <begin position="23"/>
        <end position="33"/>
    </location>
</feature>
<feature type="short sequence motif" description="'KMSKS' region" evidence="1">
    <location>
        <begin position="267"/>
        <end position="271"/>
    </location>
</feature>
<feature type="binding site" evidence="1">
    <location>
        <position position="270"/>
    </location>
    <ligand>
        <name>ATP</name>
        <dbReference type="ChEBI" id="CHEBI:30616"/>
    </ligand>
</feature>
<dbReference type="EC" id="6.1.1.17" evidence="1"/>
<dbReference type="EMBL" id="AM849034">
    <property type="protein sequence ID" value="CAQ01539.1"/>
    <property type="molecule type" value="Genomic_DNA"/>
</dbReference>
<dbReference type="RefSeq" id="WP_012298806.1">
    <property type="nucleotide sequence ID" value="NZ_MZMM01000001.1"/>
</dbReference>
<dbReference type="SMR" id="B0RIP8"/>
<dbReference type="STRING" id="31964.CMS1428"/>
<dbReference type="KEGG" id="cms:CMS1428"/>
<dbReference type="eggNOG" id="COG0008">
    <property type="taxonomic scope" value="Bacteria"/>
</dbReference>
<dbReference type="HOGENOM" id="CLU_015768_6_3_11"/>
<dbReference type="Proteomes" id="UP000001318">
    <property type="component" value="Chromosome"/>
</dbReference>
<dbReference type="GO" id="GO:0005829">
    <property type="term" value="C:cytosol"/>
    <property type="evidence" value="ECO:0007669"/>
    <property type="project" value="TreeGrafter"/>
</dbReference>
<dbReference type="GO" id="GO:0005524">
    <property type="term" value="F:ATP binding"/>
    <property type="evidence" value="ECO:0007669"/>
    <property type="project" value="UniProtKB-UniRule"/>
</dbReference>
<dbReference type="GO" id="GO:0004818">
    <property type="term" value="F:glutamate-tRNA ligase activity"/>
    <property type="evidence" value="ECO:0007669"/>
    <property type="project" value="UniProtKB-UniRule"/>
</dbReference>
<dbReference type="GO" id="GO:0000049">
    <property type="term" value="F:tRNA binding"/>
    <property type="evidence" value="ECO:0007669"/>
    <property type="project" value="InterPro"/>
</dbReference>
<dbReference type="GO" id="GO:0008270">
    <property type="term" value="F:zinc ion binding"/>
    <property type="evidence" value="ECO:0007669"/>
    <property type="project" value="InterPro"/>
</dbReference>
<dbReference type="GO" id="GO:0006424">
    <property type="term" value="P:glutamyl-tRNA aminoacylation"/>
    <property type="evidence" value="ECO:0007669"/>
    <property type="project" value="UniProtKB-UniRule"/>
</dbReference>
<dbReference type="CDD" id="cd00808">
    <property type="entry name" value="GluRS_core"/>
    <property type="match status" value="1"/>
</dbReference>
<dbReference type="FunFam" id="3.40.50.620:FF:000149">
    <property type="entry name" value="Glutamate--tRNA ligase"/>
    <property type="match status" value="1"/>
</dbReference>
<dbReference type="Gene3D" id="1.10.10.350">
    <property type="match status" value="1"/>
</dbReference>
<dbReference type="Gene3D" id="1.10.8.70">
    <property type="entry name" value="Glutamate-tRNA synthetase, class I, anticodon-binding domain 1"/>
    <property type="match status" value="1"/>
</dbReference>
<dbReference type="Gene3D" id="1.10.1160.10">
    <property type="entry name" value="Glutamyl-trna Synthetase, Domain 2"/>
    <property type="match status" value="1"/>
</dbReference>
<dbReference type="Gene3D" id="3.90.800.10">
    <property type="entry name" value="Glutamyl-tRNA Synthetase, Domain 3"/>
    <property type="match status" value="1"/>
</dbReference>
<dbReference type="Gene3D" id="3.40.50.620">
    <property type="entry name" value="HUPs"/>
    <property type="match status" value="1"/>
</dbReference>
<dbReference type="HAMAP" id="MF_00022">
    <property type="entry name" value="Glu_tRNA_synth_type1"/>
    <property type="match status" value="1"/>
</dbReference>
<dbReference type="InterPro" id="IPR045462">
    <property type="entry name" value="aa-tRNA-synth_I_cd-bd"/>
</dbReference>
<dbReference type="InterPro" id="IPR020751">
    <property type="entry name" value="aa-tRNA-synth_I_codon-bd_sub2"/>
</dbReference>
<dbReference type="InterPro" id="IPR008925">
    <property type="entry name" value="aa_tRNA-synth_I_cd-bd_sf"/>
</dbReference>
<dbReference type="InterPro" id="IPR004527">
    <property type="entry name" value="Glu-tRNA-ligase_bac/mito"/>
</dbReference>
<dbReference type="InterPro" id="IPR020752">
    <property type="entry name" value="Glu-tRNA-synth_I_codon-bd_sub1"/>
</dbReference>
<dbReference type="InterPro" id="IPR000924">
    <property type="entry name" value="Glu/Gln-tRNA-synth"/>
</dbReference>
<dbReference type="InterPro" id="IPR020058">
    <property type="entry name" value="Glu/Gln-tRNA-synth_Ib_cat-dom"/>
</dbReference>
<dbReference type="InterPro" id="IPR020061">
    <property type="entry name" value="Glu_tRNA_lig_a-bdl"/>
</dbReference>
<dbReference type="InterPro" id="IPR049940">
    <property type="entry name" value="GluQ/Sye"/>
</dbReference>
<dbReference type="InterPro" id="IPR033910">
    <property type="entry name" value="GluRS_core"/>
</dbReference>
<dbReference type="InterPro" id="IPR014729">
    <property type="entry name" value="Rossmann-like_a/b/a_fold"/>
</dbReference>
<dbReference type="NCBIfam" id="TIGR00464">
    <property type="entry name" value="gltX_bact"/>
    <property type="match status" value="1"/>
</dbReference>
<dbReference type="PANTHER" id="PTHR43311">
    <property type="entry name" value="GLUTAMATE--TRNA LIGASE"/>
    <property type="match status" value="1"/>
</dbReference>
<dbReference type="PANTHER" id="PTHR43311:SF2">
    <property type="entry name" value="GLUTAMATE--TRNA LIGASE, MITOCHONDRIAL-RELATED"/>
    <property type="match status" value="1"/>
</dbReference>
<dbReference type="Pfam" id="PF19269">
    <property type="entry name" value="Anticodon_2"/>
    <property type="match status" value="1"/>
</dbReference>
<dbReference type="Pfam" id="PF00749">
    <property type="entry name" value="tRNA-synt_1c"/>
    <property type="match status" value="1"/>
</dbReference>
<dbReference type="PRINTS" id="PR00987">
    <property type="entry name" value="TRNASYNTHGLU"/>
</dbReference>
<dbReference type="SUPFAM" id="SSF48163">
    <property type="entry name" value="An anticodon-binding domain of class I aminoacyl-tRNA synthetases"/>
    <property type="match status" value="1"/>
</dbReference>
<dbReference type="SUPFAM" id="SSF52374">
    <property type="entry name" value="Nucleotidylyl transferase"/>
    <property type="match status" value="1"/>
</dbReference>
<sequence>MTETTAHPVTTATGTDVRVRFCPSPTGTPHVGLIRTALFNWAYARHTGGKLVFRVEDTDAARDSEESYEQLIEALRWLEIDWDEGEGVGGPHAPYRQSQRTDLYLDVIAKLTASGHLYESFATAEEIEARNRAAGRDPKMGYDNFERDLTEEERQAFRDEGRSPALRLRVPDTDLSFDDLVRGTVTFPAGSFPDFVLVRPNGAPLYTLVNPVDDALMGITHVLRGEDLLSSTPRQIALYHALIDIGVADAIPRFGHLPYVMGEGNKKLSKRDPESNLFHHRDRGFIPEGLINYLALLGWSLTHDRDVFSRMEMVTAFDVADVNPNPARFDLKKAESLNGDHIRLLALDDFAQRLVPYLQAADVVGAELTHDQRRMLEAAAPLVQERMQLLGEAPDLLSFLFTTADELPYDDAAVQALKDDAPEVLAASRGALSGVPHTQWDIDLVQEVLQNTLITGMGMKPRLAYGPLRVGISGRRISPPLFESMVLLGKDETIARLDRLAGMLGE</sequence>
<comment type="function">
    <text evidence="1">Catalyzes the attachment of glutamate to tRNA(Glu) in a two-step reaction: glutamate is first activated by ATP to form Glu-AMP and then transferred to the acceptor end of tRNA(Glu).</text>
</comment>
<comment type="catalytic activity">
    <reaction evidence="1">
        <text>tRNA(Glu) + L-glutamate + ATP = L-glutamyl-tRNA(Glu) + AMP + diphosphate</text>
        <dbReference type="Rhea" id="RHEA:23540"/>
        <dbReference type="Rhea" id="RHEA-COMP:9663"/>
        <dbReference type="Rhea" id="RHEA-COMP:9680"/>
        <dbReference type="ChEBI" id="CHEBI:29985"/>
        <dbReference type="ChEBI" id="CHEBI:30616"/>
        <dbReference type="ChEBI" id="CHEBI:33019"/>
        <dbReference type="ChEBI" id="CHEBI:78442"/>
        <dbReference type="ChEBI" id="CHEBI:78520"/>
        <dbReference type="ChEBI" id="CHEBI:456215"/>
        <dbReference type="EC" id="6.1.1.17"/>
    </reaction>
</comment>
<comment type="subunit">
    <text evidence="1">Monomer.</text>
</comment>
<comment type="subcellular location">
    <subcellularLocation>
        <location evidence="1">Cytoplasm</location>
    </subcellularLocation>
</comment>
<comment type="similarity">
    <text evidence="1">Belongs to the class-I aminoacyl-tRNA synthetase family. Glutamate--tRNA ligase type 1 subfamily.</text>
</comment>
<keyword id="KW-0030">Aminoacyl-tRNA synthetase</keyword>
<keyword id="KW-0067">ATP-binding</keyword>
<keyword id="KW-0963">Cytoplasm</keyword>
<keyword id="KW-0436">Ligase</keyword>
<keyword id="KW-0547">Nucleotide-binding</keyword>
<keyword id="KW-0648">Protein biosynthesis</keyword>
<proteinExistence type="inferred from homology"/>
<protein>
    <recommendedName>
        <fullName evidence="1">Glutamate--tRNA ligase</fullName>
        <ecNumber evidence="1">6.1.1.17</ecNumber>
    </recommendedName>
    <alternativeName>
        <fullName evidence="1">Glutamyl-tRNA synthetase</fullName>
        <shortName evidence="1">GluRS</shortName>
    </alternativeName>
</protein>
<gene>
    <name evidence="1" type="primary">gltX</name>
    <name type="ordered locus">CMS1428</name>
</gene>
<evidence type="ECO:0000255" key="1">
    <source>
        <dbReference type="HAMAP-Rule" id="MF_00022"/>
    </source>
</evidence>
<organism>
    <name type="scientific">Clavibacter sepedonicus</name>
    <name type="common">Clavibacter michiganensis subsp. sepedonicus</name>
    <dbReference type="NCBI Taxonomy" id="31964"/>
    <lineage>
        <taxon>Bacteria</taxon>
        <taxon>Bacillati</taxon>
        <taxon>Actinomycetota</taxon>
        <taxon>Actinomycetes</taxon>
        <taxon>Micrococcales</taxon>
        <taxon>Microbacteriaceae</taxon>
        <taxon>Clavibacter</taxon>
    </lineage>
</organism>
<accession>B0RIP8</accession>
<name>SYE_CLASE</name>
<reference key="1">
    <citation type="journal article" date="2008" name="J. Bacteriol.">
        <title>Genome of the actinomycete plant pathogen Clavibacter michiganensis subsp. sepedonicus suggests recent niche adaptation.</title>
        <authorList>
            <person name="Bentley S.D."/>
            <person name="Corton C."/>
            <person name="Brown S.E."/>
            <person name="Barron A."/>
            <person name="Clark L."/>
            <person name="Doggett J."/>
            <person name="Harris B."/>
            <person name="Ormond D."/>
            <person name="Quail M.A."/>
            <person name="May G."/>
            <person name="Francis D."/>
            <person name="Knudson D."/>
            <person name="Parkhill J."/>
            <person name="Ishimaru C.A."/>
        </authorList>
    </citation>
    <scope>NUCLEOTIDE SEQUENCE [LARGE SCALE GENOMIC DNA]</scope>
    <source>
        <strain>ATCC 33113 / DSM 20744 / JCM 9667 / LMG 2889 / ICMP 2535 / C-1</strain>
    </source>
</reference>